<evidence type="ECO:0000250" key="1">
    <source>
        <dbReference type="UniProtKB" id="O76024"/>
    </source>
</evidence>
<evidence type="ECO:0000255" key="2"/>
<evidence type="ECO:0000255" key="3">
    <source>
        <dbReference type="PROSITE-ProRule" id="PRU00498"/>
    </source>
</evidence>
<evidence type="ECO:0000256" key="4">
    <source>
        <dbReference type="SAM" id="MobiDB-lite"/>
    </source>
</evidence>
<evidence type="ECO:0000269" key="5">
    <source>
    </source>
</evidence>
<evidence type="ECO:0000305" key="6"/>
<evidence type="ECO:0000312" key="7">
    <source>
        <dbReference type="EMBL" id="AAM51004.1"/>
    </source>
</evidence>
<evidence type="ECO:0000312" key="8">
    <source>
        <dbReference type="FlyBase" id="FBgn0039003"/>
    </source>
</evidence>
<evidence type="ECO:0000312" key="9">
    <source>
        <dbReference type="Proteomes" id="UP000000803"/>
    </source>
</evidence>
<sequence length="853" mass="96789">MATWTQNEPTGVTKRRRWNLEDRASLNKLKHHIAEEGCPQMQYDLAKELLDNSIVEPNLAKGNQSQKAVNWLVSAAHNGHEDAVKLLRQCYNDGSGITAENTDEVRRCLAMTPGERAARKAARELFACLSNGNEHITPKQLERKMRRIYNLQRKRRRRDDDRSSSSSEGEQEPECEPLEDVPTIDLANVERRRLITEAHLVSAASNYSAGQMPSVNDALTLSVPDPRSLDHVPCFYRMIFHPLIFFTLFYHRLLNLIVSIPNVIPLSVRCSVLVAISWWSSRHMLPLVSYYLSLGIMIWATCKMLKTKQQFVDFRIWSGLFLSYGDQNIEADIAEHRFLRNNMKPYLYFFCAFICNLIVYPLVTDAWLPHSELTIISGALTFITMCVSMYASSHQLPDWLVIVSFAVNVLAKYPYEMDEVVSTRWRFLDLRVPTFSSFVIGNGIEFCLNCRTALYLFIPVLLIMMAKRSRWHGVYTFLIPHCVTLSWLQVCIATSQSSTVFGVMRAALGLAGIVLFLPLFGIVALLVPVFVAIDSLGLASEQLRWGSTALACGLVVVLSCILALNRATQKYITMLQLITAITTACLLVLPYMTSSFKDTPRFNAMPRAGLHSLSETNTLPWDRFHALCAQPVHEQPNKIKAQLRCSLLNGMPVIWEGSVTKVEISRVSNFLEDTIANYLPVWLGRMLRCLHGENISQHFKCDPKLDAQCEEWRSVFKTFNAQSGSCTLQRWNRYEYELLVKVGTKRSGRLLGRSTTTDVILRAHHDFGNFTRLLSEGDVVLFYGILHNSRLLADNVQVKLKTIECVECRSRDLGTASIERVVAASPMDARLQDLMRGIKYLLNALLNPLITFK</sequence>
<reference evidence="9" key="1">
    <citation type="journal article" date="2000" name="Science">
        <title>The genome sequence of Drosophila melanogaster.</title>
        <authorList>
            <person name="Adams M.D."/>
            <person name="Celniker S.E."/>
            <person name="Holt R.A."/>
            <person name="Evans C.A."/>
            <person name="Gocayne J.D."/>
            <person name="Amanatides P.G."/>
            <person name="Scherer S.E."/>
            <person name="Li P.W."/>
            <person name="Hoskins R.A."/>
            <person name="Galle R.F."/>
            <person name="George R.A."/>
            <person name="Lewis S.E."/>
            <person name="Richards S."/>
            <person name="Ashburner M."/>
            <person name="Henderson S.N."/>
            <person name="Sutton G.G."/>
            <person name="Wortman J.R."/>
            <person name="Yandell M.D."/>
            <person name="Zhang Q."/>
            <person name="Chen L.X."/>
            <person name="Brandon R.C."/>
            <person name="Rogers Y.-H.C."/>
            <person name="Blazej R.G."/>
            <person name="Champe M."/>
            <person name="Pfeiffer B.D."/>
            <person name="Wan K.H."/>
            <person name="Doyle C."/>
            <person name="Baxter E.G."/>
            <person name="Helt G."/>
            <person name="Nelson C.R."/>
            <person name="Miklos G.L.G."/>
            <person name="Abril J.F."/>
            <person name="Agbayani A."/>
            <person name="An H.-J."/>
            <person name="Andrews-Pfannkoch C."/>
            <person name="Baldwin D."/>
            <person name="Ballew R.M."/>
            <person name="Basu A."/>
            <person name="Baxendale J."/>
            <person name="Bayraktaroglu L."/>
            <person name="Beasley E.M."/>
            <person name="Beeson K.Y."/>
            <person name="Benos P.V."/>
            <person name="Berman B.P."/>
            <person name="Bhandari D."/>
            <person name="Bolshakov S."/>
            <person name="Borkova D."/>
            <person name="Botchan M.R."/>
            <person name="Bouck J."/>
            <person name="Brokstein P."/>
            <person name="Brottier P."/>
            <person name="Burtis K.C."/>
            <person name="Busam D.A."/>
            <person name="Butler H."/>
            <person name="Cadieu E."/>
            <person name="Center A."/>
            <person name="Chandra I."/>
            <person name="Cherry J.M."/>
            <person name="Cawley S."/>
            <person name="Dahlke C."/>
            <person name="Davenport L.B."/>
            <person name="Davies P."/>
            <person name="de Pablos B."/>
            <person name="Delcher A."/>
            <person name="Deng Z."/>
            <person name="Mays A.D."/>
            <person name="Dew I."/>
            <person name="Dietz S.M."/>
            <person name="Dodson K."/>
            <person name="Doup L.E."/>
            <person name="Downes M."/>
            <person name="Dugan-Rocha S."/>
            <person name="Dunkov B.C."/>
            <person name="Dunn P."/>
            <person name="Durbin K.J."/>
            <person name="Evangelista C.C."/>
            <person name="Ferraz C."/>
            <person name="Ferriera S."/>
            <person name="Fleischmann W."/>
            <person name="Fosler C."/>
            <person name="Gabrielian A.E."/>
            <person name="Garg N.S."/>
            <person name="Gelbart W.M."/>
            <person name="Glasser K."/>
            <person name="Glodek A."/>
            <person name="Gong F."/>
            <person name="Gorrell J.H."/>
            <person name="Gu Z."/>
            <person name="Guan P."/>
            <person name="Harris M."/>
            <person name="Harris N.L."/>
            <person name="Harvey D.A."/>
            <person name="Heiman T.J."/>
            <person name="Hernandez J.R."/>
            <person name="Houck J."/>
            <person name="Hostin D."/>
            <person name="Houston K.A."/>
            <person name="Howland T.J."/>
            <person name="Wei M.-H."/>
            <person name="Ibegwam C."/>
            <person name="Jalali M."/>
            <person name="Kalush F."/>
            <person name="Karpen G.H."/>
            <person name="Ke Z."/>
            <person name="Kennison J.A."/>
            <person name="Ketchum K.A."/>
            <person name="Kimmel B.E."/>
            <person name="Kodira C.D."/>
            <person name="Kraft C.L."/>
            <person name="Kravitz S."/>
            <person name="Kulp D."/>
            <person name="Lai Z."/>
            <person name="Lasko P."/>
            <person name="Lei Y."/>
            <person name="Levitsky A.A."/>
            <person name="Li J.H."/>
            <person name="Li Z."/>
            <person name="Liang Y."/>
            <person name="Lin X."/>
            <person name="Liu X."/>
            <person name="Mattei B."/>
            <person name="McIntosh T.C."/>
            <person name="McLeod M.P."/>
            <person name="McPherson D."/>
            <person name="Merkulov G."/>
            <person name="Milshina N.V."/>
            <person name="Mobarry C."/>
            <person name="Morris J."/>
            <person name="Moshrefi A."/>
            <person name="Mount S.M."/>
            <person name="Moy M."/>
            <person name="Murphy B."/>
            <person name="Murphy L."/>
            <person name="Muzny D.M."/>
            <person name="Nelson D.L."/>
            <person name="Nelson D.R."/>
            <person name="Nelson K.A."/>
            <person name="Nixon K."/>
            <person name="Nusskern D.R."/>
            <person name="Pacleb J.M."/>
            <person name="Palazzolo M."/>
            <person name="Pittman G.S."/>
            <person name="Pan S."/>
            <person name="Pollard J."/>
            <person name="Puri V."/>
            <person name="Reese M.G."/>
            <person name="Reinert K."/>
            <person name="Remington K."/>
            <person name="Saunders R.D.C."/>
            <person name="Scheeler F."/>
            <person name="Shen H."/>
            <person name="Shue B.C."/>
            <person name="Siden-Kiamos I."/>
            <person name="Simpson M."/>
            <person name="Skupski M.P."/>
            <person name="Smith T.J."/>
            <person name="Spier E."/>
            <person name="Spradling A.C."/>
            <person name="Stapleton M."/>
            <person name="Strong R."/>
            <person name="Sun E."/>
            <person name="Svirskas R."/>
            <person name="Tector C."/>
            <person name="Turner R."/>
            <person name="Venter E."/>
            <person name="Wang A.H."/>
            <person name="Wang X."/>
            <person name="Wang Z.-Y."/>
            <person name="Wassarman D.A."/>
            <person name="Weinstock G.M."/>
            <person name="Weissenbach J."/>
            <person name="Williams S.M."/>
            <person name="Woodage T."/>
            <person name="Worley K.C."/>
            <person name="Wu D."/>
            <person name="Yang S."/>
            <person name="Yao Q.A."/>
            <person name="Ye J."/>
            <person name="Yeh R.-F."/>
            <person name="Zaveri J.S."/>
            <person name="Zhan M."/>
            <person name="Zhang G."/>
            <person name="Zhao Q."/>
            <person name="Zheng L."/>
            <person name="Zheng X.H."/>
            <person name="Zhong F.N."/>
            <person name="Zhong W."/>
            <person name="Zhou X."/>
            <person name="Zhu S.C."/>
            <person name="Zhu X."/>
            <person name="Smith H.O."/>
            <person name="Gibbs R.A."/>
            <person name="Myers E.W."/>
            <person name="Rubin G.M."/>
            <person name="Venter J.C."/>
        </authorList>
    </citation>
    <scope>NUCLEOTIDE SEQUENCE [LARGE SCALE GENOMIC DNA]</scope>
    <source>
        <strain evidence="9">Berkeley</strain>
    </source>
</reference>
<reference evidence="9" key="2">
    <citation type="journal article" date="2002" name="Genome Biol.">
        <title>Annotation of the Drosophila melanogaster euchromatic genome: a systematic review.</title>
        <authorList>
            <person name="Misra S."/>
            <person name="Crosby M.A."/>
            <person name="Mungall C.J."/>
            <person name="Matthews B.B."/>
            <person name="Campbell K.S."/>
            <person name="Hradecky P."/>
            <person name="Huang Y."/>
            <person name="Kaminker J.S."/>
            <person name="Millburn G.H."/>
            <person name="Prochnik S.E."/>
            <person name="Smith C.D."/>
            <person name="Tupy J.L."/>
            <person name="Whitfield E.J."/>
            <person name="Bayraktaroglu L."/>
            <person name="Berman B.P."/>
            <person name="Bettencourt B.R."/>
            <person name="Celniker S.E."/>
            <person name="de Grey A.D.N.J."/>
            <person name="Drysdale R.A."/>
            <person name="Harris N.L."/>
            <person name="Richter J."/>
            <person name="Russo S."/>
            <person name="Schroeder A.J."/>
            <person name="Shu S.Q."/>
            <person name="Stapleton M."/>
            <person name="Yamada C."/>
            <person name="Ashburner M."/>
            <person name="Gelbart W.M."/>
            <person name="Rubin G.M."/>
            <person name="Lewis S.E."/>
        </authorList>
    </citation>
    <scope>GENOME REANNOTATION</scope>
    <source>
        <strain evidence="9">Berkeley</strain>
    </source>
</reference>
<reference evidence="7" key="3">
    <citation type="journal article" date="2002" name="Genome Biol.">
        <title>A Drosophila full-length cDNA resource.</title>
        <authorList>
            <person name="Stapleton M."/>
            <person name="Carlson J.W."/>
            <person name="Brokstein P."/>
            <person name="Yu C."/>
            <person name="Champe M."/>
            <person name="George R.A."/>
            <person name="Guarin H."/>
            <person name="Kronmiller B."/>
            <person name="Pacleb J.M."/>
            <person name="Park S."/>
            <person name="Wan K.H."/>
            <person name="Rubin G.M."/>
            <person name="Celniker S.E."/>
        </authorList>
    </citation>
    <scope>NUCLEOTIDE SEQUENCE [LARGE SCALE MRNA]</scope>
    <source>
        <strain evidence="7">Berkeley</strain>
        <tissue evidence="7">Embryo</tissue>
    </source>
</reference>
<reference evidence="6" key="4">
    <citation type="journal article" date="2018" name="PLoS Genet.">
        <title>Knockdown of wfs1, a fly homolog of Wolfram syndrome 1, in the nervous system increases susceptibility to age- and stress-induced neuronal dysfunction and degeneration in Drosophila.</title>
        <authorList>
            <person name="Sakakibara Y."/>
            <person name="Sekiya M."/>
            <person name="Fujisaki N."/>
            <person name="Quan X."/>
            <person name="Iijima K.M."/>
        </authorList>
    </citation>
    <scope>FUNCTION</scope>
    <scope>SUBCELLULAR LOCATION</scope>
    <scope>TISSUE SPECIFICITY</scope>
    <scope>DISRUPTION PHENOTYPE</scope>
    <scope>MUTAGENESIS OF 592-MET--LYS-853</scope>
</reference>
<gene>
    <name evidence="8" type="primary">wfs1</name>
    <name evidence="8" type="ORF">CG4917</name>
</gene>
<name>WFS1_DROME</name>
<keyword id="KW-0025">Alternative splicing</keyword>
<keyword id="KW-0256">Endoplasmic reticulum</keyword>
<keyword id="KW-0325">Glycoprotein</keyword>
<keyword id="KW-0472">Membrane</keyword>
<keyword id="KW-0496">Mitochondrion</keyword>
<keyword id="KW-1185">Reference proteome</keyword>
<keyword id="KW-0812">Transmembrane</keyword>
<keyword id="KW-1133">Transmembrane helix</keyword>
<accession>Q8IMZ9</accession>
<accession>A0A0B4JDG5</accession>
<accession>Q8MS19</accession>
<comment type="function">
    <text evidence="1 5">Participates in the regulation of cellular Ca(2+) homeostasis, at least partly, by modulating the filling state of the endoplasmic reticulum Ca(2+) store (By similarity). In neurons and glial cells, has a role in maintaining neuronal function and integrity during aging (PubMed:29357349).</text>
</comment>
<comment type="subcellular location">
    <subcellularLocation>
        <location evidence="2">Membrane</location>
        <topology evidence="2">Multi-pass membrane protein</topology>
    </subcellularLocation>
    <subcellularLocation>
        <location evidence="5">Endoplasmic reticulum</location>
    </subcellularLocation>
    <subcellularLocation>
        <location evidence="5">Mitochondrion</location>
    </subcellularLocation>
</comment>
<comment type="alternative products">
    <event type="alternative splicing"/>
    <isoform>
        <id>Q8IMZ9-1</id>
        <name evidence="8">A</name>
        <sequence type="displayed"/>
    </isoform>
    <isoform>
        <id>Q8IMZ9-2</id>
        <name evidence="8">C</name>
        <sequence type="described" ref="VSP_059550"/>
    </isoform>
</comment>
<comment type="tissue specificity">
    <text evidence="5">Detected in adult brain.</text>
</comment>
<comment type="disruption phenotype">
    <text evidence="5">RNAi-mediated knockdown in neurons results in age-dependent behavioral deficits and neurodegeneration, which is further enhanced when the knockdown is in both neurons and glial cells; the defects include age-dependent locomotor deficits, increased susceptibility to oxidative stress and glutamate excitotoxicity, increased age-dependent appearance of vacuoles in the central neuropil and optic lobes of the fly brain, and shortened lifespan.</text>
</comment>
<comment type="sequence caution" evidence="6">
    <conflict type="erroneous termination">
        <sequence resource="EMBL-CDS" id="AAM51004"/>
    </conflict>
    <text>Truncated C-terminus.</text>
</comment>
<proteinExistence type="evidence at protein level"/>
<dbReference type="EMBL" id="AE014297">
    <property type="protein sequence ID" value="AAN13917.2"/>
    <property type="molecule type" value="Genomic_DNA"/>
</dbReference>
<dbReference type="EMBL" id="AE014297">
    <property type="protein sequence ID" value="ADV37358.1"/>
    <property type="molecule type" value="Genomic_DNA"/>
</dbReference>
<dbReference type="EMBL" id="AY119144">
    <property type="protein sequence ID" value="AAM51004.1"/>
    <property type="status" value="ALT_SEQ"/>
    <property type="molecule type" value="mRNA"/>
</dbReference>
<dbReference type="RefSeq" id="NP_001189267.1">
    <molecule id="Q8IMZ9-2"/>
    <property type="nucleotide sequence ID" value="NM_001202338.2"/>
</dbReference>
<dbReference type="RefSeq" id="NP_651079.2">
    <molecule id="Q8IMZ9-1"/>
    <property type="nucleotide sequence ID" value="NM_142822.3"/>
</dbReference>
<dbReference type="SMR" id="Q8IMZ9"/>
<dbReference type="FunCoup" id="Q8IMZ9">
    <property type="interactions" value="448"/>
</dbReference>
<dbReference type="STRING" id="7227.FBpp0083727"/>
<dbReference type="TCDB" id="8.A.57.1.2">
    <property type="family name" value="the wolfram syndrome or wolframin (wolframin) family"/>
</dbReference>
<dbReference type="GlyCosmos" id="Q8IMZ9">
    <property type="glycosylation" value="2 sites, No reported glycans"/>
</dbReference>
<dbReference type="GlyGen" id="Q8IMZ9">
    <property type="glycosylation" value="2 sites"/>
</dbReference>
<dbReference type="PaxDb" id="7227-FBpp0083728"/>
<dbReference type="EnsemblMetazoa" id="FBtr0084334">
    <molecule id="Q8IMZ9-1"/>
    <property type="protein sequence ID" value="FBpp0083727"/>
    <property type="gene ID" value="FBgn0039003"/>
</dbReference>
<dbReference type="EnsemblMetazoa" id="FBtr0302856">
    <molecule id="Q8IMZ9-2"/>
    <property type="protein sequence ID" value="FBpp0291996"/>
    <property type="gene ID" value="FBgn0039003"/>
</dbReference>
<dbReference type="GeneID" id="42679"/>
<dbReference type="KEGG" id="dme:Dmel_CG4917"/>
<dbReference type="UCSC" id="CG4917-RA">
    <molecule id="Q8IMZ9-1"/>
    <property type="organism name" value="d. melanogaster"/>
</dbReference>
<dbReference type="AGR" id="FB:FBgn0039003"/>
<dbReference type="CTD" id="7466"/>
<dbReference type="FlyBase" id="FBgn0039003">
    <property type="gene designation" value="wfs1"/>
</dbReference>
<dbReference type="VEuPathDB" id="VectorBase:FBgn0039003"/>
<dbReference type="eggNOG" id="ENOG502QSC1">
    <property type="taxonomic scope" value="Eukaryota"/>
</dbReference>
<dbReference type="GeneTree" id="ENSGT00390000016928"/>
<dbReference type="HOGENOM" id="CLU_014606_0_0_1"/>
<dbReference type="InParanoid" id="Q8IMZ9"/>
<dbReference type="OMA" id="PPAWETK"/>
<dbReference type="OrthoDB" id="5865303at2759"/>
<dbReference type="PhylomeDB" id="Q8IMZ9"/>
<dbReference type="Reactome" id="R-DME-381426">
    <property type="pathway name" value="Regulation of Insulin-like Growth Factor (IGF) transport and uptake by Insulin-like Growth Factor Binding Proteins (IGFBPs)"/>
</dbReference>
<dbReference type="Reactome" id="R-DME-8957275">
    <property type="pathway name" value="Post-translational protein phosphorylation"/>
</dbReference>
<dbReference type="BioGRID-ORCS" id="42679">
    <property type="hits" value="0 hits in 1 CRISPR screen"/>
</dbReference>
<dbReference type="GenomeRNAi" id="42679"/>
<dbReference type="PRO" id="PR:Q8IMZ9"/>
<dbReference type="Proteomes" id="UP000000803">
    <property type="component" value="Chromosome 3R"/>
</dbReference>
<dbReference type="Bgee" id="FBgn0039003">
    <property type="expression patterns" value="Expressed in adult tracheocyte (Drosophila) in open tracheal system trachea and 46 other cell types or tissues"/>
</dbReference>
<dbReference type="ExpressionAtlas" id="Q8IMZ9">
    <property type="expression patterns" value="baseline and differential"/>
</dbReference>
<dbReference type="GO" id="GO:0005789">
    <property type="term" value="C:endoplasmic reticulum membrane"/>
    <property type="evidence" value="ECO:0000318"/>
    <property type="project" value="GO_Central"/>
</dbReference>
<dbReference type="GO" id="GO:0005739">
    <property type="term" value="C:mitochondrion"/>
    <property type="evidence" value="ECO:0007669"/>
    <property type="project" value="UniProtKB-SubCell"/>
</dbReference>
<dbReference type="GO" id="GO:0031625">
    <property type="term" value="F:ubiquitin protein ligase binding"/>
    <property type="evidence" value="ECO:0000250"/>
    <property type="project" value="FlyBase"/>
</dbReference>
<dbReference type="GO" id="GO:0008344">
    <property type="term" value="P:adult locomotory behavior"/>
    <property type="evidence" value="ECO:0000315"/>
    <property type="project" value="UniProtKB"/>
</dbReference>
<dbReference type="GO" id="GO:0055074">
    <property type="term" value="P:calcium ion homeostasis"/>
    <property type="evidence" value="ECO:0000318"/>
    <property type="project" value="GO_Central"/>
</dbReference>
<dbReference type="GO" id="GO:0030968">
    <property type="term" value="P:endoplasmic reticulum unfolded protein response"/>
    <property type="evidence" value="ECO:0000318"/>
    <property type="project" value="GO_Central"/>
</dbReference>
<dbReference type="GO" id="GO:0010629">
    <property type="term" value="P:negative regulation of gene expression"/>
    <property type="evidence" value="ECO:0000315"/>
    <property type="project" value="UniProtKB"/>
</dbReference>
<dbReference type="FunFam" id="1.25.40.10:FF:001112">
    <property type="entry name" value="wolframin"/>
    <property type="match status" value="1"/>
</dbReference>
<dbReference type="Gene3D" id="1.25.40.10">
    <property type="entry name" value="Tetratricopeptide repeat domain"/>
    <property type="match status" value="1"/>
</dbReference>
<dbReference type="InterPro" id="IPR011990">
    <property type="entry name" value="TPR-like_helical_dom_sf"/>
</dbReference>
<dbReference type="InterPro" id="IPR045400">
    <property type="entry name" value="Wolframin_Cys-rich"/>
</dbReference>
<dbReference type="InterPro" id="IPR045460">
    <property type="entry name" value="Wolframin_EF-hand"/>
</dbReference>
<dbReference type="InterPro" id="IPR026209">
    <property type="entry name" value="Wolframin_fam"/>
</dbReference>
<dbReference type="InterPro" id="IPR045461">
    <property type="entry name" value="Wolframin_OB_fold"/>
</dbReference>
<dbReference type="InterPro" id="IPR045458">
    <property type="entry name" value="Wolframin_Sel1-like_rpt"/>
</dbReference>
<dbReference type="PANTHER" id="PTHR13098">
    <property type="entry name" value="WOLFRAMIN"/>
    <property type="match status" value="1"/>
</dbReference>
<dbReference type="PANTHER" id="PTHR13098:SF3">
    <property type="entry name" value="WOLFRAMIN"/>
    <property type="match status" value="1"/>
</dbReference>
<dbReference type="Pfam" id="PF20053">
    <property type="entry name" value="WC-rich"/>
    <property type="match status" value="1"/>
</dbReference>
<dbReference type="Pfam" id="PF19913">
    <property type="entry name" value="WCOB"/>
    <property type="match status" value="1"/>
</dbReference>
<dbReference type="Pfam" id="PF19914">
    <property type="entry name" value="WEF-hand"/>
    <property type="match status" value="1"/>
</dbReference>
<dbReference type="Pfam" id="PF20023">
    <property type="entry name" value="WSLR"/>
    <property type="match status" value="1"/>
</dbReference>
<dbReference type="PRINTS" id="PR02060">
    <property type="entry name" value="WOLFFAMILY"/>
</dbReference>
<protein>
    <recommendedName>
        <fullName evidence="6">Wolframin</fullName>
    </recommendedName>
</protein>
<organism evidence="9">
    <name type="scientific">Drosophila melanogaster</name>
    <name type="common">Fruit fly</name>
    <dbReference type="NCBI Taxonomy" id="7227"/>
    <lineage>
        <taxon>Eukaryota</taxon>
        <taxon>Metazoa</taxon>
        <taxon>Ecdysozoa</taxon>
        <taxon>Arthropoda</taxon>
        <taxon>Hexapoda</taxon>
        <taxon>Insecta</taxon>
        <taxon>Pterygota</taxon>
        <taxon>Neoptera</taxon>
        <taxon>Endopterygota</taxon>
        <taxon>Diptera</taxon>
        <taxon>Brachycera</taxon>
        <taxon>Muscomorpha</taxon>
        <taxon>Ephydroidea</taxon>
        <taxon>Drosophilidae</taxon>
        <taxon>Drosophila</taxon>
        <taxon>Sophophora</taxon>
    </lineage>
</organism>
<feature type="chain" id="PRO_0000444010" description="Wolframin" evidence="6">
    <location>
        <begin position="1"/>
        <end position="853"/>
    </location>
</feature>
<feature type="transmembrane region" description="Helical" evidence="2">
    <location>
        <begin position="238"/>
        <end position="258"/>
    </location>
</feature>
<feature type="transmembrane region" description="Helical" evidence="2">
    <location>
        <begin position="259"/>
        <end position="279"/>
    </location>
</feature>
<feature type="transmembrane region" description="Helical" evidence="2">
    <location>
        <begin position="285"/>
        <end position="305"/>
    </location>
</feature>
<feature type="transmembrane region" description="Helical" evidence="2">
    <location>
        <begin position="347"/>
        <end position="367"/>
    </location>
</feature>
<feature type="transmembrane region" description="Helical" evidence="2">
    <location>
        <begin position="373"/>
        <end position="393"/>
    </location>
</feature>
<feature type="transmembrane region" description="Helical" evidence="2">
    <location>
        <begin position="446"/>
        <end position="466"/>
    </location>
</feature>
<feature type="transmembrane region" description="Helical" evidence="2">
    <location>
        <begin position="473"/>
        <end position="493"/>
    </location>
</feature>
<feature type="transmembrane region" description="Helical" evidence="2">
    <location>
        <begin position="513"/>
        <end position="533"/>
    </location>
</feature>
<feature type="transmembrane region" description="Helical" evidence="2">
    <location>
        <begin position="545"/>
        <end position="565"/>
    </location>
</feature>
<feature type="transmembrane region" description="Helical" evidence="2">
    <location>
        <begin position="572"/>
        <end position="592"/>
    </location>
</feature>
<feature type="region of interest" description="Disordered" evidence="4">
    <location>
        <begin position="139"/>
        <end position="179"/>
    </location>
</feature>
<feature type="compositionally biased region" description="Basic residues" evidence="4">
    <location>
        <begin position="144"/>
        <end position="157"/>
    </location>
</feature>
<feature type="compositionally biased region" description="Acidic residues" evidence="4">
    <location>
        <begin position="169"/>
        <end position="179"/>
    </location>
</feature>
<feature type="glycosylation site" description="N-linked (GlcNAc...) asparagine" evidence="3">
    <location>
        <position position="694"/>
    </location>
</feature>
<feature type="glycosylation site" description="N-linked (GlcNAc...) asparagine" evidence="3">
    <location>
        <position position="769"/>
    </location>
</feature>
<feature type="splice variant" id="VSP_059550" description="In isoform C." evidence="6">
    <location>
        <position position="55"/>
    </location>
</feature>
<feature type="mutagenesis site" description="Results in age-dependent locomotor defects and neurodegeneration." evidence="5">
    <location>
        <begin position="592"/>
        <end position="853"/>
    </location>
</feature>
<feature type="sequence conflict" description="In Ref. 3; AAM51004." evidence="6" ref="3">
    <original>R</original>
    <variation>H</variation>
    <location>
        <position position="237"/>
    </location>
</feature>
<feature type="sequence conflict" description="In Ref. 3; AAM51004." evidence="6" ref="3">
    <original>T</original>
    <variation>A</variation>
    <location>
        <position position="307"/>
    </location>
</feature>
<feature type="sequence conflict" description="In Ref. 3; AAM51004." evidence="6" ref="3">
    <original>I</original>
    <variation>V</variation>
    <location>
        <position position="492"/>
    </location>
</feature>